<dbReference type="EC" id="1.11.1.-" evidence="1"/>
<dbReference type="EMBL" id="BT021909">
    <property type="protein sequence ID" value="AAX46756.1"/>
    <property type="molecule type" value="mRNA"/>
</dbReference>
<dbReference type="EMBL" id="BC123386">
    <property type="protein sequence ID" value="AAI23387.1"/>
    <property type="molecule type" value="mRNA"/>
</dbReference>
<dbReference type="RefSeq" id="NP_001019678.1">
    <property type="nucleotide sequence ID" value="NM_001024507.1"/>
</dbReference>
<dbReference type="RefSeq" id="XP_005203155.1">
    <molecule id="Q58CN8-1"/>
    <property type="nucleotide sequence ID" value="XM_005203098.3"/>
</dbReference>
<dbReference type="SMR" id="Q58CN8"/>
<dbReference type="FunCoup" id="Q58CN8">
    <property type="interactions" value="235"/>
</dbReference>
<dbReference type="STRING" id="9913.ENSBTAP00000040490"/>
<dbReference type="PaxDb" id="9913-ENSBTAP00000055856"/>
<dbReference type="Ensembl" id="ENSBTAT00000114730.1">
    <molecule id="Q58CN8-1"/>
    <property type="protein sequence ID" value="ENSBTAP00000084602.1"/>
    <property type="gene ID" value="ENSBTAG00000002363.7"/>
</dbReference>
<dbReference type="GeneID" id="509863"/>
<dbReference type="KEGG" id="bta:509863"/>
<dbReference type="CTD" id="83667"/>
<dbReference type="VEuPathDB" id="HostDB:ENSBTAG00000002363"/>
<dbReference type="eggNOG" id="KOG3746">
    <property type="taxonomic scope" value="Eukaryota"/>
</dbReference>
<dbReference type="GeneTree" id="ENSGT00950000183168"/>
<dbReference type="HOGENOM" id="CLU_020429_0_0_1"/>
<dbReference type="InParanoid" id="Q58CN8"/>
<dbReference type="OMA" id="HAIIVLC"/>
<dbReference type="OrthoDB" id="337464at2759"/>
<dbReference type="TreeFam" id="TF314230"/>
<dbReference type="Reactome" id="R-BTA-5628897">
    <property type="pathway name" value="TP53 Regulates Metabolic Genes"/>
</dbReference>
<dbReference type="Reactome" id="R-BTA-9639288">
    <property type="pathway name" value="Amino acids regulate mTORC1"/>
</dbReference>
<dbReference type="Reactome" id="R-BTA-9755511">
    <property type="pathway name" value="KEAP1-NFE2L2 pathway"/>
</dbReference>
<dbReference type="Proteomes" id="UP000009136">
    <property type="component" value="Chromosome 2"/>
</dbReference>
<dbReference type="Bgee" id="ENSBTAG00000002363">
    <property type="expression patterns" value="Expressed in esophagus and 103 other cell types or tissues"/>
</dbReference>
<dbReference type="GO" id="GO:1990316">
    <property type="term" value="C:Atg1/ULK1 kinase complex"/>
    <property type="evidence" value="ECO:0000250"/>
    <property type="project" value="UniProtKB"/>
</dbReference>
<dbReference type="GO" id="GO:0005737">
    <property type="term" value="C:cytoplasm"/>
    <property type="evidence" value="ECO:0000250"/>
    <property type="project" value="UniProtKB"/>
</dbReference>
<dbReference type="GO" id="GO:0005634">
    <property type="term" value="C:nucleus"/>
    <property type="evidence" value="ECO:0007669"/>
    <property type="project" value="InterPro"/>
</dbReference>
<dbReference type="GO" id="GO:0070728">
    <property type="term" value="F:L-leucine binding"/>
    <property type="evidence" value="ECO:0000250"/>
    <property type="project" value="UniProtKB"/>
</dbReference>
<dbReference type="GO" id="GO:0016684">
    <property type="term" value="F:oxidoreductase activity, acting on peroxide as acceptor"/>
    <property type="evidence" value="ECO:0000318"/>
    <property type="project" value="GO_Central"/>
</dbReference>
<dbReference type="GO" id="GO:0004601">
    <property type="term" value="F:peroxidase activity"/>
    <property type="evidence" value="ECO:0000250"/>
    <property type="project" value="UniProtKB"/>
</dbReference>
<dbReference type="GO" id="GO:0140311">
    <property type="term" value="F:protein sequestering activity"/>
    <property type="evidence" value="ECO:0000250"/>
    <property type="project" value="UniProtKB"/>
</dbReference>
<dbReference type="GO" id="GO:0044877">
    <property type="term" value="F:protein-containing complex binding"/>
    <property type="evidence" value="ECO:0000250"/>
    <property type="project" value="UniProtKB"/>
</dbReference>
<dbReference type="GO" id="GO:0098869">
    <property type="term" value="P:cellular oxidant detoxification"/>
    <property type="evidence" value="ECO:0000250"/>
    <property type="project" value="UniProtKB"/>
</dbReference>
<dbReference type="GO" id="GO:0071233">
    <property type="term" value="P:cellular response to L-leucine"/>
    <property type="evidence" value="ECO:0000318"/>
    <property type="project" value="GO_Central"/>
</dbReference>
<dbReference type="GO" id="GO:1990253">
    <property type="term" value="P:cellular response to leucine starvation"/>
    <property type="evidence" value="ECO:0000250"/>
    <property type="project" value="UniProtKB"/>
</dbReference>
<dbReference type="GO" id="GO:0034599">
    <property type="term" value="P:cellular response to oxidative stress"/>
    <property type="evidence" value="ECO:0000250"/>
    <property type="project" value="UniProtKB"/>
</dbReference>
<dbReference type="GO" id="GO:0030330">
    <property type="term" value="P:DNA damage response, signal transduction by p53 class mediator"/>
    <property type="evidence" value="ECO:0000250"/>
    <property type="project" value="UniProtKB"/>
</dbReference>
<dbReference type="GO" id="GO:0030308">
    <property type="term" value="P:negative regulation of cell growth"/>
    <property type="evidence" value="ECO:0000250"/>
    <property type="project" value="UniProtKB"/>
</dbReference>
<dbReference type="GO" id="GO:1904262">
    <property type="term" value="P:negative regulation of TORC1 signaling"/>
    <property type="evidence" value="ECO:0000250"/>
    <property type="project" value="UniProtKB"/>
</dbReference>
<dbReference type="GO" id="GO:1902010">
    <property type="term" value="P:negative regulation of translation in response to endoplasmic reticulum stress"/>
    <property type="evidence" value="ECO:0000250"/>
    <property type="project" value="UniProtKB"/>
</dbReference>
<dbReference type="GO" id="GO:0016239">
    <property type="term" value="P:positive regulation of macroautophagy"/>
    <property type="evidence" value="ECO:0000250"/>
    <property type="project" value="UniProtKB"/>
</dbReference>
<dbReference type="GO" id="GO:1900182">
    <property type="term" value="P:positive regulation of protein localization to nucleus"/>
    <property type="evidence" value="ECO:0000250"/>
    <property type="project" value="UniProtKB"/>
</dbReference>
<dbReference type="GO" id="GO:0072593">
    <property type="term" value="P:reactive oxygen species metabolic process"/>
    <property type="evidence" value="ECO:0000250"/>
    <property type="project" value="UniProtKB"/>
</dbReference>
<dbReference type="GO" id="GO:0001932">
    <property type="term" value="P:regulation of protein phosphorylation"/>
    <property type="evidence" value="ECO:0000250"/>
    <property type="project" value="UniProtKB"/>
</dbReference>
<dbReference type="GO" id="GO:1901031">
    <property type="term" value="P:regulation of response to reactive oxygen species"/>
    <property type="evidence" value="ECO:0007669"/>
    <property type="project" value="InterPro"/>
</dbReference>
<dbReference type="FunFam" id="1.20.1290.10:FF:000001">
    <property type="entry name" value="Sestrin 1"/>
    <property type="match status" value="1"/>
</dbReference>
<dbReference type="Gene3D" id="1.20.1290.10">
    <property type="entry name" value="AhpD-like"/>
    <property type="match status" value="1"/>
</dbReference>
<dbReference type="InterPro" id="IPR029032">
    <property type="entry name" value="AhpD-like"/>
</dbReference>
<dbReference type="InterPro" id="IPR006730">
    <property type="entry name" value="Sestrin"/>
</dbReference>
<dbReference type="PANTHER" id="PTHR12474">
    <property type="entry name" value="P53 REGULATED PA26 NUCLEAR PROTEIN SESTRIN"/>
    <property type="match status" value="1"/>
</dbReference>
<dbReference type="PANTHER" id="PTHR12474:SF2">
    <property type="entry name" value="SESTRIN-2"/>
    <property type="match status" value="1"/>
</dbReference>
<dbReference type="Pfam" id="PF04636">
    <property type="entry name" value="PA26"/>
    <property type="match status" value="1"/>
</dbReference>
<dbReference type="SUPFAM" id="SSF69118">
    <property type="entry name" value="AhpD-like"/>
    <property type="match status" value="1"/>
</dbReference>
<accession>Q58CN8</accession>
<accession>Q08E69</accession>
<organism>
    <name type="scientific">Bos taurus</name>
    <name type="common">Bovine</name>
    <dbReference type="NCBI Taxonomy" id="9913"/>
    <lineage>
        <taxon>Eukaryota</taxon>
        <taxon>Metazoa</taxon>
        <taxon>Chordata</taxon>
        <taxon>Craniata</taxon>
        <taxon>Vertebrata</taxon>
        <taxon>Euteleostomi</taxon>
        <taxon>Mammalia</taxon>
        <taxon>Eutheria</taxon>
        <taxon>Laurasiatheria</taxon>
        <taxon>Artiodactyla</taxon>
        <taxon>Ruminantia</taxon>
        <taxon>Pecora</taxon>
        <taxon>Bovidae</taxon>
        <taxon>Bovinae</taxon>
        <taxon>Bos</taxon>
    </lineage>
</organism>
<gene>
    <name evidence="1" type="primary">SESN2</name>
</gene>
<feature type="chain" id="PRO_0000231009" description="Sestrin-2">
    <location>
        <begin position="1"/>
        <end position="471"/>
    </location>
</feature>
<feature type="region of interest" description="N-terminal domain; mediates the alkylhydroperoxide reductase activity" evidence="1">
    <location>
        <begin position="57"/>
        <end position="230"/>
    </location>
</feature>
<feature type="region of interest" description="Disordered" evidence="3">
    <location>
        <begin position="212"/>
        <end position="241"/>
    </location>
</feature>
<feature type="region of interest" description="C-terminal domain; mediates TORC1 regulation" evidence="1">
    <location>
        <begin position="299"/>
        <end position="471"/>
    </location>
</feature>
<feature type="active site" description="Cysteine sulfenic acid (-SOH) intermediate" evidence="1">
    <location>
        <position position="116"/>
    </location>
</feature>
<feature type="binding site" evidence="1">
    <location>
        <begin position="365"/>
        <end position="368"/>
    </location>
    <ligand>
        <name>L-leucine</name>
        <dbReference type="ChEBI" id="CHEBI:57427"/>
    </ligand>
</feature>
<feature type="binding site" evidence="1">
    <location>
        <position position="377"/>
    </location>
    <ligand>
        <name>L-leucine</name>
        <dbReference type="ChEBI" id="CHEBI:57427"/>
    </ligand>
</feature>
<feature type="binding site" evidence="1">
    <location>
        <position position="442"/>
    </location>
    <ligand>
        <name>L-leucine</name>
        <dbReference type="ChEBI" id="CHEBI:57427"/>
    </ligand>
</feature>
<feature type="modified residue" description="N-acetylmethionine" evidence="1">
    <location>
        <position position="1"/>
    </location>
</feature>
<feature type="modified residue" description="Phosphoserine" evidence="1">
    <location>
        <position position="240"/>
    </location>
</feature>
<feature type="cross-link" description="Glycyl lysine isopeptide (Lys-Gly) (interchain with G-Cter in ubiquitin)" evidence="1">
    <location>
        <position position="166"/>
    </location>
</feature>
<feature type="splice variant" id="VSP_025032" description="In isoform 2." evidence="4">
    <original>HVNLLLLEARMQAALLYALRAITRYMT</original>
    <variation>RLVGEEQDGSLRRRRGLGTQRGPDLGIHPASLHVSCIGRQILYHERPLGSPFTHL</variation>
    <location>
        <begin position="445"/>
        <end position="471"/>
    </location>
</feature>
<feature type="sequence conflict" description="In Ref. 1; AAX46756." evidence="5" ref="1">
    <original>Q</original>
    <variation>R</variation>
    <location>
        <position position="331"/>
    </location>
</feature>
<comment type="function">
    <text evidence="1">Functions as an intracellular leucine sensor that negatively regulates the mTORC1 signaling pathway through the GATOR complex. In absence of leucine, binds the GATOR subcomplex GATOR2 and prevents mTORC1 signaling. Binding of leucine to SESN2 disrupts its interaction with GATOR2 thereby activating the TORC1 signaling pathway. This stress-inducible metabolic regulator also plays a role in protection against oxidative and genotoxic stresses. May negatively regulate protein translation in response to endoplasmic reticulum stress, via mTORC1. May positively regulate the transcription by NFE2L2 of genes involved in the response to oxidative stress by facilitating the SQSTM1-mediated autophagic degradation of KEAP1. May also mediate TP53 inhibition of TORC1 signaling upon genotoxic stress. Moreover, may prevent the accumulation of reactive oxygen species (ROS) through the alkylhydroperoxide reductase activity born by the N-terminal domain of the protein. Was originally reported to contribute to oxidative stress resistance by reducing PRDX1. However, this could not be confirmed.</text>
</comment>
<comment type="catalytic activity">
    <reaction evidence="1">
        <text>a hydroperoxide + L-cysteinyl-[protein] = S-hydroxy-L-cysteinyl-[protein] + an alcohol</text>
        <dbReference type="Rhea" id="RHEA:67124"/>
        <dbReference type="Rhea" id="RHEA-COMP:10131"/>
        <dbReference type="Rhea" id="RHEA-COMP:17193"/>
        <dbReference type="ChEBI" id="CHEBI:29950"/>
        <dbReference type="ChEBI" id="CHEBI:30879"/>
        <dbReference type="ChEBI" id="CHEBI:35924"/>
        <dbReference type="ChEBI" id="CHEBI:61973"/>
    </reaction>
    <physiologicalReaction direction="left-to-right" evidence="1">
        <dbReference type="Rhea" id="RHEA:67125"/>
    </physiologicalReaction>
</comment>
<comment type="subunit">
    <text evidence="1 2">Interacts with the GATOR2 complex which is composed of MIOS, SEC13, SEH1L, WDR24 and WDR59; the interaction is negatively regulated by leucine. Conveys leucine availability via direct interaction with SEH1L and WDR24 components of the GATOR2 complex. Interacts with RRAGA, RRAGB, RRAGC and RRAGD; may function as a guanine nucleotide dissociation inhibitor for RRAGs and regulate them (By similarity). May interact with the TORC2 complex (By similarity). Interacts with KEAP1, RBX1, SQSTM and ULK1; to regulate the degradation of KEAP1. May also associate with the complex composed of TSC1, TSC2 and the AMP-responsive protein kinase/AMPK to regulate TORC1 signaling. May interact with PRDX1 (By similarity).</text>
</comment>
<comment type="subcellular location">
    <subcellularLocation>
        <location evidence="1">Cytoplasm</location>
    </subcellularLocation>
</comment>
<comment type="alternative products">
    <event type="alternative splicing"/>
    <isoform>
        <id>Q58CN8-1</id>
        <name>1</name>
        <sequence type="displayed"/>
    </isoform>
    <isoform>
        <id>Q58CN8-2</id>
        <name>2</name>
        <sequence type="described" ref="VSP_025032"/>
    </isoform>
</comment>
<comment type="domain">
    <text evidence="1">The N-terminal domain has an alkylhydroperoxide reductase activity.</text>
</comment>
<comment type="domain">
    <text evidence="1">The C-terminal domain mediates interaction with GATOR2 through which it regulates TORC1 signaling.</text>
</comment>
<comment type="PTM">
    <text evidence="1">Phosphorylated by ULK1 at multiple sites.</text>
</comment>
<comment type="PTM">
    <text evidence="1">Ubiquitinated at Lys-166 by RNF167 via 'Lys-63'-linked polyubiquitination in response to leucine deprivation: ubiquitination promotes SESN2-interaction with the GATOR2 complex, leading to inhibit the TORC1 signaling pathway. Deubiquitinated at Lys-166 by STAMBPL1, promoting the TORC1 signaling pathway. Ubiquitinated by RNF186; ubiquitination mediates proteasomal degradation.</text>
</comment>
<comment type="similarity">
    <text evidence="5">Belongs to the sestrin family.</text>
</comment>
<sequence length="471" mass="53600">MIVADSECRAELKGYLPGAGEEQRESRVRRGPRGPSAFIPVEEVLQEGAESLEQHLGLEALMSSGRVDNLAVVMGLHPDYFTSFWRLHCLLLHTDGPLANSWRHYIAIMAAARHQCSYLVGSHMAEFLQTGGDPEWLLGLHRAPEKLRKLSEINKLLAHRPWLITKEHIQALLKTGEHSWSLAELIQALVLLTHCHSLASFVFGCGILPEGDPEGSPAPQAPSPPSEQSTPPSRDSLNHSGGFEAARDVEALMERMRQLQESLLQDEGASQEEMESRFELEKSESLLVTPSVDILEPFANPDMLCFVEDPTFGYEDFTRRGTQAPPTFRAQDYTWEDHGYSLIQRLYPEGGQLLDEKFQAAYSLTYNTIAMHSGVDTSVLRRAIWNYIHCVFGIRYDDYDYGEVNQLLERNLKVYIKTVACYPEKTTRRMYNHFWRHFRHSEKVHVNLLLLEARMQAALLYALRAITRYMT</sequence>
<protein>
    <recommendedName>
        <fullName evidence="5">Sestrin-2</fullName>
        <ecNumber evidence="1">1.11.1.-</ecNumber>
    </recommendedName>
</protein>
<proteinExistence type="evidence at transcript level"/>
<reference key="1">
    <citation type="journal article" date="2005" name="BMC Genomics">
        <title>Characterization of 954 bovine full-CDS cDNA sequences.</title>
        <authorList>
            <person name="Harhay G.P."/>
            <person name="Sonstegard T.S."/>
            <person name="Keele J.W."/>
            <person name="Heaton M.P."/>
            <person name="Clawson M.L."/>
            <person name="Snelling W.M."/>
            <person name="Wiedmann R.T."/>
            <person name="Van Tassell C.P."/>
            <person name="Smith T.P.L."/>
        </authorList>
    </citation>
    <scope>NUCLEOTIDE SEQUENCE [LARGE SCALE MRNA] (ISOFORM 2)</scope>
</reference>
<reference key="2">
    <citation type="submission" date="2006-09" db="EMBL/GenBank/DDBJ databases">
        <authorList>
            <consortium name="NIH - Mammalian Gene Collection (MGC) project"/>
        </authorList>
    </citation>
    <scope>NUCLEOTIDE SEQUENCE [LARGE SCALE MRNA] (ISOFORM 1)</scope>
    <source>
        <strain>Hereford</strain>
        <tissue>Hypothalamus</tissue>
    </source>
</reference>
<name>SESN2_BOVIN</name>
<evidence type="ECO:0000250" key="1">
    <source>
        <dbReference type="UniProtKB" id="P58004"/>
    </source>
</evidence>
<evidence type="ECO:0000250" key="2">
    <source>
        <dbReference type="UniProtKB" id="P58043"/>
    </source>
</evidence>
<evidence type="ECO:0000256" key="3">
    <source>
        <dbReference type="SAM" id="MobiDB-lite"/>
    </source>
</evidence>
<evidence type="ECO:0000303" key="4">
    <source>
    </source>
</evidence>
<evidence type="ECO:0000305" key="5"/>
<keyword id="KW-0007">Acetylation</keyword>
<keyword id="KW-0025">Alternative splicing</keyword>
<keyword id="KW-0963">Cytoplasm</keyword>
<keyword id="KW-1017">Isopeptide bond</keyword>
<keyword id="KW-0560">Oxidoreductase</keyword>
<keyword id="KW-0597">Phosphoprotein</keyword>
<keyword id="KW-1185">Reference proteome</keyword>
<keyword id="KW-0832">Ubl conjugation</keyword>